<evidence type="ECO:0000255" key="1">
    <source>
        <dbReference type="HAMAP-Rule" id="MF_00057"/>
    </source>
</evidence>
<reference key="1">
    <citation type="submission" date="2007-09" db="EMBL/GenBank/DDBJ databases">
        <title>Complete sequence of chromosome of Serratia proteamaculans 568.</title>
        <authorList>
            <consortium name="US DOE Joint Genome Institute"/>
            <person name="Copeland A."/>
            <person name="Lucas S."/>
            <person name="Lapidus A."/>
            <person name="Barry K."/>
            <person name="Glavina del Rio T."/>
            <person name="Dalin E."/>
            <person name="Tice H."/>
            <person name="Pitluck S."/>
            <person name="Chain P."/>
            <person name="Malfatti S."/>
            <person name="Shin M."/>
            <person name="Vergez L."/>
            <person name="Schmutz J."/>
            <person name="Larimer F."/>
            <person name="Land M."/>
            <person name="Hauser L."/>
            <person name="Kyrpides N."/>
            <person name="Kim E."/>
            <person name="Taghavi S."/>
            <person name="Newman L."/>
            <person name="Vangronsveld J."/>
            <person name="van der Lelie D."/>
            <person name="Richardson P."/>
        </authorList>
    </citation>
    <scope>NUCLEOTIDE SEQUENCE [LARGE SCALE GENOMIC DNA]</scope>
    <source>
        <strain>568</strain>
    </source>
</reference>
<name>KDSB_SERP5</name>
<gene>
    <name evidence="1" type="primary">kdsB</name>
    <name type="ordered locus">Spro_1719</name>
</gene>
<protein>
    <recommendedName>
        <fullName evidence="1">3-deoxy-manno-octulosonate cytidylyltransferase</fullName>
        <ecNumber evidence="1">2.7.7.38</ecNumber>
    </recommendedName>
    <alternativeName>
        <fullName evidence="1">CMP-2-keto-3-deoxyoctulosonic acid synthase</fullName>
        <shortName evidence="1">CKS</shortName>
        <shortName evidence="1">CMP-KDO synthase</shortName>
    </alternativeName>
</protein>
<sequence length="249" mass="27330">MSFIAIIPARYASTRLPGKPLADIHGKPMVVHVMERARESGASRVIVATDHPAVAEAVKAAGGEVCMTRADHNSGTERLAEVIEHYGFADDEIIVNVQGDEPLIPPVIVRQVAENLAGSQAGMATLAVPIESAEEAFNPNAVKVVMDAQGYALYFSRATIPWDRERFAQSKESIGDSLLRHIGIYAYRAGFVRRYVTWAPSQLEQIELLEQLRVLWYGEKIHVAVAKAMPTVGVDTQEDLQRVRDSIKG</sequence>
<comment type="function">
    <text evidence="1">Activates KDO (a required 8-carbon sugar) for incorporation into bacterial lipopolysaccharide in Gram-negative bacteria.</text>
</comment>
<comment type="catalytic activity">
    <reaction evidence="1">
        <text>3-deoxy-alpha-D-manno-oct-2-ulosonate + CTP = CMP-3-deoxy-beta-D-manno-octulosonate + diphosphate</text>
        <dbReference type="Rhea" id="RHEA:23448"/>
        <dbReference type="ChEBI" id="CHEBI:33019"/>
        <dbReference type="ChEBI" id="CHEBI:37563"/>
        <dbReference type="ChEBI" id="CHEBI:85986"/>
        <dbReference type="ChEBI" id="CHEBI:85987"/>
        <dbReference type="EC" id="2.7.7.38"/>
    </reaction>
</comment>
<comment type="pathway">
    <text evidence="1">Nucleotide-sugar biosynthesis; CMP-3-deoxy-D-manno-octulosonate biosynthesis; CMP-3-deoxy-D-manno-octulosonate from 3-deoxy-D-manno-octulosonate and CTP: step 1/1.</text>
</comment>
<comment type="pathway">
    <text evidence="1">Bacterial outer membrane biogenesis; lipopolysaccharide biosynthesis.</text>
</comment>
<comment type="subcellular location">
    <subcellularLocation>
        <location evidence="1">Cytoplasm</location>
    </subcellularLocation>
</comment>
<comment type="similarity">
    <text evidence="1">Belongs to the KdsB family.</text>
</comment>
<proteinExistence type="inferred from homology"/>
<feature type="chain" id="PRO_1000057404" description="3-deoxy-manno-octulosonate cytidylyltransferase">
    <location>
        <begin position="1"/>
        <end position="249"/>
    </location>
</feature>
<accession>A8GCI3</accession>
<organism>
    <name type="scientific">Serratia proteamaculans (strain 568)</name>
    <dbReference type="NCBI Taxonomy" id="399741"/>
    <lineage>
        <taxon>Bacteria</taxon>
        <taxon>Pseudomonadati</taxon>
        <taxon>Pseudomonadota</taxon>
        <taxon>Gammaproteobacteria</taxon>
        <taxon>Enterobacterales</taxon>
        <taxon>Yersiniaceae</taxon>
        <taxon>Serratia</taxon>
    </lineage>
</organism>
<dbReference type="EC" id="2.7.7.38" evidence="1"/>
<dbReference type="EMBL" id="CP000826">
    <property type="protein sequence ID" value="ABV40823.1"/>
    <property type="molecule type" value="Genomic_DNA"/>
</dbReference>
<dbReference type="SMR" id="A8GCI3"/>
<dbReference type="STRING" id="399741.Spro_1719"/>
<dbReference type="KEGG" id="spe:Spro_1719"/>
<dbReference type="eggNOG" id="COG1212">
    <property type="taxonomic scope" value="Bacteria"/>
</dbReference>
<dbReference type="HOGENOM" id="CLU_065038_1_0_6"/>
<dbReference type="OrthoDB" id="9815559at2"/>
<dbReference type="UniPathway" id="UPA00030"/>
<dbReference type="UniPathway" id="UPA00358">
    <property type="reaction ID" value="UER00476"/>
</dbReference>
<dbReference type="GO" id="GO:0005829">
    <property type="term" value="C:cytosol"/>
    <property type="evidence" value="ECO:0007669"/>
    <property type="project" value="TreeGrafter"/>
</dbReference>
<dbReference type="GO" id="GO:0008690">
    <property type="term" value="F:3-deoxy-manno-octulosonate cytidylyltransferase activity"/>
    <property type="evidence" value="ECO:0007669"/>
    <property type="project" value="UniProtKB-UniRule"/>
</dbReference>
<dbReference type="GO" id="GO:0033468">
    <property type="term" value="P:CMP-keto-3-deoxy-D-manno-octulosonic acid biosynthetic process"/>
    <property type="evidence" value="ECO:0007669"/>
    <property type="project" value="UniProtKB-UniRule"/>
</dbReference>
<dbReference type="GO" id="GO:0009103">
    <property type="term" value="P:lipopolysaccharide biosynthetic process"/>
    <property type="evidence" value="ECO:0007669"/>
    <property type="project" value="UniProtKB-UniRule"/>
</dbReference>
<dbReference type="CDD" id="cd02517">
    <property type="entry name" value="CMP-KDO-Synthetase"/>
    <property type="match status" value="1"/>
</dbReference>
<dbReference type="FunFam" id="3.90.550.10:FF:000011">
    <property type="entry name" value="3-deoxy-manno-octulosonate cytidylyltransferase"/>
    <property type="match status" value="1"/>
</dbReference>
<dbReference type="Gene3D" id="3.90.550.10">
    <property type="entry name" value="Spore Coat Polysaccharide Biosynthesis Protein SpsA, Chain A"/>
    <property type="match status" value="1"/>
</dbReference>
<dbReference type="HAMAP" id="MF_00057">
    <property type="entry name" value="KdsB"/>
    <property type="match status" value="1"/>
</dbReference>
<dbReference type="InterPro" id="IPR003329">
    <property type="entry name" value="Cytidylyl_trans"/>
</dbReference>
<dbReference type="InterPro" id="IPR004528">
    <property type="entry name" value="KdsB"/>
</dbReference>
<dbReference type="InterPro" id="IPR029044">
    <property type="entry name" value="Nucleotide-diphossugar_trans"/>
</dbReference>
<dbReference type="NCBIfam" id="TIGR00466">
    <property type="entry name" value="kdsB"/>
    <property type="match status" value="1"/>
</dbReference>
<dbReference type="NCBIfam" id="NF003950">
    <property type="entry name" value="PRK05450.1-3"/>
    <property type="match status" value="1"/>
</dbReference>
<dbReference type="NCBIfam" id="NF003952">
    <property type="entry name" value="PRK05450.1-5"/>
    <property type="match status" value="1"/>
</dbReference>
<dbReference type="NCBIfam" id="NF009905">
    <property type="entry name" value="PRK13368.1"/>
    <property type="match status" value="1"/>
</dbReference>
<dbReference type="PANTHER" id="PTHR42866">
    <property type="entry name" value="3-DEOXY-MANNO-OCTULOSONATE CYTIDYLYLTRANSFERASE"/>
    <property type="match status" value="1"/>
</dbReference>
<dbReference type="PANTHER" id="PTHR42866:SF2">
    <property type="entry name" value="3-DEOXY-MANNO-OCTULOSONATE CYTIDYLYLTRANSFERASE, MITOCHONDRIAL"/>
    <property type="match status" value="1"/>
</dbReference>
<dbReference type="Pfam" id="PF02348">
    <property type="entry name" value="CTP_transf_3"/>
    <property type="match status" value="1"/>
</dbReference>
<dbReference type="SUPFAM" id="SSF53448">
    <property type="entry name" value="Nucleotide-diphospho-sugar transferases"/>
    <property type="match status" value="1"/>
</dbReference>
<keyword id="KW-0963">Cytoplasm</keyword>
<keyword id="KW-0448">Lipopolysaccharide biosynthesis</keyword>
<keyword id="KW-0548">Nucleotidyltransferase</keyword>
<keyword id="KW-0808">Transferase</keyword>